<dbReference type="EC" id="6.3.2.8" evidence="1"/>
<dbReference type="EMBL" id="BX640449">
    <property type="protein sequence ID" value="CAE34561.1"/>
    <property type="molecule type" value="Genomic_DNA"/>
</dbReference>
<dbReference type="RefSeq" id="WP_003814572.1">
    <property type="nucleotide sequence ID" value="NC_002927.3"/>
</dbReference>
<dbReference type="SMR" id="Q7WFS3"/>
<dbReference type="GeneID" id="93205540"/>
<dbReference type="KEGG" id="bbr:BB4197"/>
<dbReference type="eggNOG" id="COG0773">
    <property type="taxonomic scope" value="Bacteria"/>
</dbReference>
<dbReference type="HOGENOM" id="CLU_028104_2_2_4"/>
<dbReference type="UniPathway" id="UPA00219"/>
<dbReference type="Proteomes" id="UP000001027">
    <property type="component" value="Chromosome"/>
</dbReference>
<dbReference type="GO" id="GO:0005737">
    <property type="term" value="C:cytoplasm"/>
    <property type="evidence" value="ECO:0007669"/>
    <property type="project" value="UniProtKB-SubCell"/>
</dbReference>
<dbReference type="GO" id="GO:0005524">
    <property type="term" value="F:ATP binding"/>
    <property type="evidence" value="ECO:0007669"/>
    <property type="project" value="UniProtKB-UniRule"/>
</dbReference>
<dbReference type="GO" id="GO:0008763">
    <property type="term" value="F:UDP-N-acetylmuramate-L-alanine ligase activity"/>
    <property type="evidence" value="ECO:0007669"/>
    <property type="project" value="UniProtKB-UniRule"/>
</dbReference>
<dbReference type="GO" id="GO:0051301">
    <property type="term" value="P:cell division"/>
    <property type="evidence" value="ECO:0007669"/>
    <property type="project" value="UniProtKB-KW"/>
</dbReference>
<dbReference type="GO" id="GO:0071555">
    <property type="term" value="P:cell wall organization"/>
    <property type="evidence" value="ECO:0007669"/>
    <property type="project" value="UniProtKB-KW"/>
</dbReference>
<dbReference type="GO" id="GO:0009252">
    <property type="term" value="P:peptidoglycan biosynthetic process"/>
    <property type="evidence" value="ECO:0007669"/>
    <property type="project" value="UniProtKB-UniRule"/>
</dbReference>
<dbReference type="GO" id="GO:0008360">
    <property type="term" value="P:regulation of cell shape"/>
    <property type="evidence" value="ECO:0007669"/>
    <property type="project" value="UniProtKB-KW"/>
</dbReference>
<dbReference type="FunFam" id="3.40.1190.10:FF:000001">
    <property type="entry name" value="UDP-N-acetylmuramate--L-alanine ligase"/>
    <property type="match status" value="1"/>
</dbReference>
<dbReference type="Gene3D" id="3.90.190.20">
    <property type="entry name" value="Mur ligase, C-terminal domain"/>
    <property type="match status" value="1"/>
</dbReference>
<dbReference type="Gene3D" id="3.40.1190.10">
    <property type="entry name" value="Mur-like, catalytic domain"/>
    <property type="match status" value="1"/>
</dbReference>
<dbReference type="Gene3D" id="3.40.50.720">
    <property type="entry name" value="NAD(P)-binding Rossmann-like Domain"/>
    <property type="match status" value="1"/>
</dbReference>
<dbReference type="HAMAP" id="MF_00046">
    <property type="entry name" value="MurC"/>
    <property type="match status" value="1"/>
</dbReference>
<dbReference type="InterPro" id="IPR036565">
    <property type="entry name" value="Mur-like_cat_sf"/>
</dbReference>
<dbReference type="InterPro" id="IPR004101">
    <property type="entry name" value="Mur_ligase_C"/>
</dbReference>
<dbReference type="InterPro" id="IPR036615">
    <property type="entry name" value="Mur_ligase_C_dom_sf"/>
</dbReference>
<dbReference type="InterPro" id="IPR013221">
    <property type="entry name" value="Mur_ligase_cen"/>
</dbReference>
<dbReference type="InterPro" id="IPR000713">
    <property type="entry name" value="Mur_ligase_N"/>
</dbReference>
<dbReference type="InterPro" id="IPR050061">
    <property type="entry name" value="MurCDEF_pg_biosynth"/>
</dbReference>
<dbReference type="InterPro" id="IPR005758">
    <property type="entry name" value="UDP-N-AcMur_Ala_ligase_MurC"/>
</dbReference>
<dbReference type="NCBIfam" id="TIGR01082">
    <property type="entry name" value="murC"/>
    <property type="match status" value="1"/>
</dbReference>
<dbReference type="PANTHER" id="PTHR43445:SF3">
    <property type="entry name" value="UDP-N-ACETYLMURAMATE--L-ALANINE LIGASE"/>
    <property type="match status" value="1"/>
</dbReference>
<dbReference type="PANTHER" id="PTHR43445">
    <property type="entry name" value="UDP-N-ACETYLMURAMATE--L-ALANINE LIGASE-RELATED"/>
    <property type="match status" value="1"/>
</dbReference>
<dbReference type="Pfam" id="PF01225">
    <property type="entry name" value="Mur_ligase"/>
    <property type="match status" value="1"/>
</dbReference>
<dbReference type="Pfam" id="PF02875">
    <property type="entry name" value="Mur_ligase_C"/>
    <property type="match status" value="1"/>
</dbReference>
<dbReference type="Pfam" id="PF08245">
    <property type="entry name" value="Mur_ligase_M"/>
    <property type="match status" value="1"/>
</dbReference>
<dbReference type="SUPFAM" id="SSF51984">
    <property type="entry name" value="MurCD N-terminal domain"/>
    <property type="match status" value="1"/>
</dbReference>
<dbReference type="SUPFAM" id="SSF53623">
    <property type="entry name" value="MurD-like peptide ligases, catalytic domain"/>
    <property type="match status" value="1"/>
</dbReference>
<dbReference type="SUPFAM" id="SSF53244">
    <property type="entry name" value="MurD-like peptide ligases, peptide-binding domain"/>
    <property type="match status" value="1"/>
</dbReference>
<sequence>MKHRIQHIHFVGVGGSGMSGIAEVLLNLGYTISGSDLNESAVTRRLAELGMRIAIGHDRANVAGAGAIVTSTAVAGDNPEVLAARAARIPVVPRAVMLAELMRLKRGIAVAGTHGKTTTTSLVASVLAAGGLDPTFVIGGRLTSAGANARLGQGEYIVVEADESDASFLNLLPVMAIVTNIDADHMDTYGHDVARLKSAFIEFTQRLPFYGSAILCADDANVREIMPFVSRPITTYGLSPDAQVCAQDVQADGTRMRFTVQRRDRDVVLPALQVELNLPGLHNVRNALAAIAVATELGVDDAAIREALAAFKGVGRRFTQWGDLPVPAAHGGGTFTLVDDYGHHPVEMAATLAAARGAWPQRRIVLAFQPHRYTRTRDCFEDFVRVLGSADGVLLTEVYAAGEAPLVAADGRALSRALRVAGKVEPVFVEDVGELPQAILDFVRDGDVVVVMGAGSISKTPALVGELA</sequence>
<proteinExistence type="inferred from homology"/>
<reference key="1">
    <citation type="journal article" date="2003" name="Nat. Genet.">
        <title>Comparative analysis of the genome sequences of Bordetella pertussis, Bordetella parapertussis and Bordetella bronchiseptica.</title>
        <authorList>
            <person name="Parkhill J."/>
            <person name="Sebaihia M."/>
            <person name="Preston A."/>
            <person name="Murphy L.D."/>
            <person name="Thomson N.R."/>
            <person name="Harris D.E."/>
            <person name="Holden M.T.G."/>
            <person name="Churcher C.M."/>
            <person name="Bentley S.D."/>
            <person name="Mungall K.L."/>
            <person name="Cerdeno-Tarraga A.-M."/>
            <person name="Temple L."/>
            <person name="James K.D."/>
            <person name="Harris B."/>
            <person name="Quail M.A."/>
            <person name="Achtman M."/>
            <person name="Atkin R."/>
            <person name="Baker S."/>
            <person name="Basham D."/>
            <person name="Bason N."/>
            <person name="Cherevach I."/>
            <person name="Chillingworth T."/>
            <person name="Collins M."/>
            <person name="Cronin A."/>
            <person name="Davis P."/>
            <person name="Doggett J."/>
            <person name="Feltwell T."/>
            <person name="Goble A."/>
            <person name="Hamlin N."/>
            <person name="Hauser H."/>
            <person name="Holroyd S."/>
            <person name="Jagels K."/>
            <person name="Leather S."/>
            <person name="Moule S."/>
            <person name="Norberczak H."/>
            <person name="O'Neil S."/>
            <person name="Ormond D."/>
            <person name="Price C."/>
            <person name="Rabbinowitsch E."/>
            <person name="Rutter S."/>
            <person name="Sanders M."/>
            <person name="Saunders D."/>
            <person name="Seeger K."/>
            <person name="Sharp S."/>
            <person name="Simmonds M."/>
            <person name="Skelton J."/>
            <person name="Squares R."/>
            <person name="Squares S."/>
            <person name="Stevens K."/>
            <person name="Unwin L."/>
            <person name="Whitehead S."/>
            <person name="Barrell B.G."/>
            <person name="Maskell D.J."/>
        </authorList>
    </citation>
    <scope>NUCLEOTIDE SEQUENCE [LARGE SCALE GENOMIC DNA]</scope>
    <source>
        <strain>ATCC BAA-588 / NCTC 13252 / RB50</strain>
    </source>
</reference>
<name>MURC_BORBR</name>
<evidence type="ECO:0000255" key="1">
    <source>
        <dbReference type="HAMAP-Rule" id="MF_00046"/>
    </source>
</evidence>
<organism>
    <name type="scientific">Bordetella bronchiseptica (strain ATCC BAA-588 / NCTC 13252 / RB50)</name>
    <name type="common">Alcaligenes bronchisepticus</name>
    <dbReference type="NCBI Taxonomy" id="257310"/>
    <lineage>
        <taxon>Bacteria</taxon>
        <taxon>Pseudomonadati</taxon>
        <taxon>Pseudomonadota</taxon>
        <taxon>Betaproteobacteria</taxon>
        <taxon>Burkholderiales</taxon>
        <taxon>Alcaligenaceae</taxon>
        <taxon>Bordetella</taxon>
    </lineage>
</organism>
<protein>
    <recommendedName>
        <fullName evidence="1">UDP-N-acetylmuramate--L-alanine ligase</fullName>
        <ecNumber evidence="1">6.3.2.8</ecNumber>
    </recommendedName>
    <alternativeName>
        <fullName evidence="1">UDP-N-acetylmuramoyl-L-alanine synthetase</fullName>
    </alternativeName>
</protein>
<keyword id="KW-0067">ATP-binding</keyword>
<keyword id="KW-0131">Cell cycle</keyword>
<keyword id="KW-0132">Cell division</keyword>
<keyword id="KW-0133">Cell shape</keyword>
<keyword id="KW-0961">Cell wall biogenesis/degradation</keyword>
<keyword id="KW-0963">Cytoplasm</keyword>
<keyword id="KW-0436">Ligase</keyword>
<keyword id="KW-0547">Nucleotide-binding</keyword>
<keyword id="KW-0573">Peptidoglycan synthesis</keyword>
<comment type="function">
    <text evidence="1">Cell wall formation.</text>
</comment>
<comment type="catalytic activity">
    <reaction evidence="1">
        <text>UDP-N-acetyl-alpha-D-muramate + L-alanine + ATP = UDP-N-acetyl-alpha-D-muramoyl-L-alanine + ADP + phosphate + H(+)</text>
        <dbReference type="Rhea" id="RHEA:23372"/>
        <dbReference type="ChEBI" id="CHEBI:15378"/>
        <dbReference type="ChEBI" id="CHEBI:30616"/>
        <dbReference type="ChEBI" id="CHEBI:43474"/>
        <dbReference type="ChEBI" id="CHEBI:57972"/>
        <dbReference type="ChEBI" id="CHEBI:70757"/>
        <dbReference type="ChEBI" id="CHEBI:83898"/>
        <dbReference type="ChEBI" id="CHEBI:456216"/>
        <dbReference type="EC" id="6.3.2.8"/>
    </reaction>
</comment>
<comment type="pathway">
    <text evidence="1">Cell wall biogenesis; peptidoglycan biosynthesis.</text>
</comment>
<comment type="subcellular location">
    <subcellularLocation>
        <location evidence="1">Cytoplasm</location>
    </subcellularLocation>
</comment>
<comment type="similarity">
    <text evidence="1">Belongs to the MurCDEF family.</text>
</comment>
<feature type="chain" id="PRO_0000182060" description="UDP-N-acetylmuramate--L-alanine ligase">
    <location>
        <begin position="1"/>
        <end position="468"/>
    </location>
</feature>
<feature type="binding site" evidence="1">
    <location>
        <begin position="112"/>
        <end position="118"/>
    </location>
    <ligand>
        <name>ATP</name>
        <dbReference type="ChEBI" id="CHEBI:30616"/>
    </ligand>
</feature>
<accession>Q7WFS3</accession>
<gene>
    <name evidence="1" type="primary">murC</name>
    <name type="ordered locus">BB4197</name>
</gene>